<feature type="chain" id="PRO_0000263877" description="Translation initiation factor IF-1">
    <location>
        <begin position="1"/>
        <end position="72"/>
    </location>
</feature>
<feature type="domain" description="S1-like" evidence="1">
    <location>
        <begin position="1"/>
        <end position="72"/>
    </location>
</feature>
<feature type="strand" evidence="2">
    <location>
        <begin position="7"/>
        <end position="16"/>
    </location>
</feature>
<feature type="strand" evidence="2">
    <location>
        <begin position="18"/>
        <end position="26"/>
    </location>
</feature>
<feature type="strand" evidence="2">
    <location>
        <begin position="31"/>
        <end position="36"/>
    </location>
</feature>
<feature type="helix" evidence="2">
    <location>
        <begin position="38"/>
        <end position="42"/>
    </location>
</feature>
<feature type="strand" evidence="2">
    <location>
        <begin position="52"/>
        <end position="57"/>
    </location>
</feature>
<feature type="turn" evidence="2">
    <location>
        <begin position="59"/>
        <end position="61"/>
    </location>
</feature>
<feature type="strand" evidence="2">
    <location>
        <begin position="62"/>
        <end position="70"/>
    </location>
</feature>
<organism>
    <name type="scientific">Staphylococcus aureus (strain NCTC 8325 / PS 47)</name>
    <dbReference type="NCBI Taxonomy" id="93061"/>
    <lineage>
        <taxon>Bacteria</taxon>
        <taxon>Bacillati</taxon>
        <taxon>Bacillota</taxon>
        <taxon>Bacilli</taxon>
        <taxon>Bacillales</taxon>
        <taxon>Staphylococcaceae</taxon>
        <taxon>Staphylococcus</taxon>
    </lineage>
</organism>
<reference key="1">
    <citation type="book" date="2006" name="Gram positive pathogens, 2nd edition">
        <title>The Staphylococcus aureus NCTC 8325 genome.</title>
        <editorList>
            <person name="Fischetti V."/>
            <person name="Novick R."/>
            <person name="Ferretti J."/>
            <person name="Portnoy D."/>
            <person name="Rood J."/>
        </editorList>
        <authorList>
            <person name="Gillaspy A.F."/>
            <person name="Worrell V."/>
            <person name="Orvis J."/>
            <person name="Roe B.A."/>
            <person name="Dyer D.W."/>
            <person name="Iandolo J.J."/>
        </authorList>
    </citation>
    <scope>NUCLEOTIDE SEQUENCE [LARGE SCALE GENOMIC DNA]</scope>
    <source>
        <strain>NCTC 8325 / PS 47</strain>
    </source>
</reference>
<sequence>MAKQDVIELEGTVLDTLPNAMFKVELENGHEILAHVSGKIRMNYIRILPGDKVTVEMSPYDLTRGRITYRYK</sequence>
<dbReference type="EMBL" id="CP000253">
    <property type="protein sequence ID" value="ABD31508.1"/>
    <property type="molecule type" value="Genomic_DNA"/>
</dbReference>
<dbReference type="RefSeq" id="WP_001118443.1">
    <property type="nucleotide sequence ID" value="NZ_LS483365.1"/>
</dbReference>
<dbReference type="RefSeq" id="YP_500957.1">
    <property type="nucleotide sequence ID" value="NC_007795.1"/>
</dbReference>
<dbReference type="PDB" id="2N8N">
    <property type="method" value="NMR"/>
    <property type="chains" value="A=1-72"/>
</dbReference>
<dbReference type="PDBsum" id="2N8N"/>
<dbReference type="SMR" id="Q2FW28"/>
<dbReference type="STRING" id="93061.SAOUHSC_02489"/>
<dbReference type="PaxDb" id="1280-SAXN108_2478"/>
<dbReference type="GeneID" id="3920866"/>
<dbReference type="GeneID" id="98346540"/>
<dbReference type="KEGG" id="sao:SAOUHSC_02489"/>
<dbReference type="PATRIC" id="fig|93061.5.peg.2245"/>
<dbReference type="eggNOG" id="COG0361">
    <property type="taxonomic scope" value="Bacteria"/>
</dbReference>
<dbReference type="HOGENOM" id="CLU_151267_1_0_9"/>
<dbReference type="OrthoDB" id="9803250at2"/>
<dbReference type="PRO" id="PR:Q2FW28"/>
<dbReference type="Proteomes" id="UP000008816">
    <property type="component" value="Chromosome"/>
</dbReference>
<dbReference type="GO" id="GO:0005829">
    <property type="term" value="C:cytosol"/>
    <property type="evidence" value="ECO:0000318"/>
    <property type="project" value="GO_Central"/>
</dbReference>
<dbReference type="GO" id="GO:0043022">
    <property type="term" value="F:ribosome binding"/>
    <property type="evidence" value="ECO:0000318"/>
    <property type="project" value="GO_Central"/>
</dbReference>
<dbReference type="GO" id="GO:0019843">
    <property type="term" value="F:rRNA binding"/>
    <property type="evidence" value="ECO:0007669"/>
    <property type="project" value="UniProtKB-UniRule"/>
</dbReference>
<dbReference type="GO" id="GO:0003743">
    <property type="term" value="F:translation initiation factor activity"/>
    <property type="evidence" value="ECO:0007669"/>
    <property type="project" value="UniProtKB-UniRule"/>
</dbReference>
<dbReference type="CDD" id="cd04451">
    <property type="entry name" value="S1_IF1"/>
    <property type="match status" value="1"/>
</dbReference>
<dbReference type="FunFam" id="2.40.50.140:FF:000002">
    <property type="entry name" value="Translation initiation factor IF-1"/>
    <property type="match status" value="1"/>
</dbReference>
<dbReference type="Gene3D" id="2.40.50.140">
    <property type="entry name" value="Nucleic acid-binding proteins"/>
    <property type="match status" value="1"/>
</dbReference>
<dbReference type="HAMAP" id="MF_00075">
    <property type="entry name" value="IF_1"/>
    <property type="match status" value="1"/>
</dbReference>
<dbReference type="InterPro" id="IPR012340">
    <property type="entry name" value="NA-bd_OB-fold"/>
</dbReference>
<dbReference type="InterPro" id="IPR006196">
    <property type="entry name" value="RNA-binding_domain_S1_IF1"/>
</dbReference>
<dbReference type="InterPro" id="IPR003029">
    <property type="entry name" value="S1_domain"/>
</dbReference>
<dbReference type="InterPro" id="IPR004368">
    <property type="entry name" value="TIF_IF1"/>
</dbReference>
<dbReference type="NCBIfam" id="TIGR00008">
    <property type="entry name" value="infA"/>
    <property type="match status" value="1"/>
</dbReference>
<dbReference type="PANTHER" id="PTHR33370">
    <property type="entry name" value="TRANSLATION INITIATION FACTOR IF-1, CHLOROPLASTIC"/>
    <property type="match status" value="1"/>
</dbReference>
<dbReference type="PANTHER" id="PTHR33370:SF1">
    <property type="entry name" value="TRANSLATION INITIATION FACTOR IF-1, CHLOROPLASTIC"/>
    <property type="match status" value="1"/>
</dbReference>
<dbReference type="Pfam" id="PF01176">
    <property type="entry name" value="eIF-1a"/>
    <property type="match status" value="1"/>
</dbReference>
<dbReference type="SMART" id="SM00316">
    <property type="entry name" value="S1"/>
    <property type="match status" value="1"/>
</dbReference>
<dbReference type="SUPFAM" id="SSF50249">
    <property type="entry name" value="Nucleic acid-binding proteins"/>
    <property type="match status" value="1"/>
</dbReference>
<dbReference type="PROSITE" id="PS50832">
    <property type="entry name" value="S1_IF1_TYPE"/>
    <property type="match status" value="1"/>
</dbReference>
<gene>
    <name evidence="1" type="primary">infA</name>
    <name type="ordered locus">SAOUHSC_02489</name>
</gene>
<proteinExistence type="evidence at protein level"/>
<name>IF1_STAA8</name>
<accession>Q2FW28</accession>
<keyword id="KW-0002">3D-structure</keyword>
<keyword id="KW-0963">Cytoplasm</keyword>
<keyword id="KW-0396">Initiation factor</keyword>
<keyword id="KW-0648">Protein biosynthesis</keyword>
<keyword id="KW-1185">Reference proteome</keyword>
<keyword id="KW-0694">RNA-binding</keyword>
<keyword id="KW-0699">rRNA-binding</keyword>
<comment type="function">
    <text evidence="1">One of the essential components for the initiation of protein synthesis. Stabilizes the binding of IF-2 and IF-3 on the 30S subunit to which N-formylmethionyl-tRNA(fMet) subsequently binds. Helps modulate mRNA selection, yielding the 30S pre-initiation complex (PIC). Upon addition of the 50S ribosomal subunit IF-1, IF-2 and IF-3 are released leaving the mature 70S translation initiation complex.</text>
</comment>
<comment type="subunit">
    <text evidence="1">Component of the 30S ribosomal translation pre-initiation complex which assembles on the 30S ribosome in the order IF-2 and IF-3, IF-1 and N-formylmethionyl-tRNA(fMet); mRNA recruitment can occur at any time during PIC assembly.</text>
</comment>
<comment type="subcellular location">
    <subcellularLocation>
        <location evidence="1">Cytoplasm</location>
    </subcellularLocation>
</comment>
<comment type="similarity">
    <text evidence="1">Belongs to the IF-1 family.</text>
</comment>
<evidence type="ECO:0000255" key="1">
    <source>
        <dbReference type="HAMAP-Rule" id="MF_00075"/>
    </source>
</evidence>
<evidence type="ECO:0007829" key="2">
    <source>
        <dbReference type="PDB" id="2N8N"/>
    </source>
</evidence>
<protein>
    <recommendedName>
        <fullName evidence="1">Translation initiation factor IF-1</fullName>
    </recommendedName>
</protein>